<sequence length="359" mass="36472">MRAAPMSLTILGIESSCDDTAAAILRGPGDDVAILSSVVSSQTDLHAAFGGVVPEIAARAHAETLDLVVEEAMATAGIALSDVDAIAVTAGPGLIGGVLSGVMAAKGLALGLGKPLIGVNHLAGHALTPRLTDGLAFPYLLLLVSGGHCQFLRVEGPERFVRLGGTIDDAPGEAFDKVARLLGLPQPGGPSVERAALAGDATRFKLPRPLLDRPGCDLSFSGLKTAVLRLRDGLVEANGGLTEQDRADICASFQAVVASVLAEKSRRALALGDVTAFAVAGGVAANQVLRAALEEVTDLPFAAPPLALCTDNAAIIAYAGLLAFEGGRVDDMTLSARPRWPLDATAAPMIGSGKKGAKA</sequence>
<evidence type="ECO:0000255" key="1">
    <source>
        <dbReference type="HAMAP-Rule" id="MF_01445"/>
    </source>
</evidence>
<comment type="function">
    <text evidence="1">Required for the formation of a threonylcarbamoyl group on adenosine at position 37 (t(6)A37) in tRNAs that read codons beginning with adenine. Is involved in the transfer of the threonylcarbamoyl moiety of threonylcarbamoyl-AMP (TC-AMP) to the N6 group of A37, together with TsaE and TsaB. TsaD likely plays a direct catalytic role in this reaction.</text>
</comment>
<comment type="catalytic activity">
    <reaction evidence="1">
        <text>L-threonylcarbamoyladenylate + adenosine(37) in tRNA = N(6)-L-threonylcarbamoyladenosine(37) in tRNA + AMP + H(+)</text>
        <dbReference type="Rhea" id="RHEA:37059"/>
        <dbReference type="Rhea" id="RHEA-COMP:10162"/>
        <dbReference type="Rhea" id="RHEA-COMP:10163"/>
        <dbReference type="ChEBI" id="CHEBI:15378"/>
        <dbReference type="ChEBI" id="CHEBI:73682"/>
        <dbReference type="ChEBI" id="CHEBI:74411"/>
        <dbReference type="ChEBI" id="CHEBI:74418"/>
        <dbReference type="ChEBI" id="CHEBI:456215"/>
        <dbReference type="EC" id="2.3.1.234"/>
    </reaction>
</comment>
<comment type="cofactor">
    <cofactor evidence="1">
        <name>Fe(2+)</name>
        <dbReference type="ChEBI" id="CHEBI:29033"/>
    </cofactor>
    <text evidence="1">Binds 1 Fe(2+) ion per subunit.</text>
</comment>
<comment type="subcellular location">
    <subcellularLocation>
        <location evidence="1">Cytoplasm</location>
    </subcellularLocation>
</comment>
<comment type="similarity">
    <text evidence="1">Belongs to the KAE1 / TsaD family.</text>
</comment>
<protein>
    <recommendedName>
        <fullName evidence="1">tRNA N6-adenosine threonylcarbamoyltransferase</fullName>
        <ecNumber evidence="1">2.3.1.234</ecNumber>
    </recommendedName>
    <alternativeName>
        <fullName evidence="1">N6-L-threonylcarbamoyladenine synthase</fullName>
        <shortName evidence="1">t(6)A synthase</shortName>
    </alternativeName>
    <alternativeName>
        <fullName evidence="1">t(6)A37 threonylcarbamoyladenosine biosynthesis protein TsaD</fullName>
    </alternativeName>
    <alternativeName>
        <fullName evidence="1">tRNA threonylcarbamoyladenosine biosynthesis protein TsaD</fullName>
    </alternativeName>
</protein>
<reference key="1">
    <citation type="submission" date="2006-02" db="EMBL/GenBank/DDBJ databases">
        <title>Complete sequence of chromosome of Jannaschia sp. CCS1.</title>
        <authorList>
            <consortium name="US DOE Joint Genome Institute"/>
            <person name="Copeland A."/>
            <person name="Lucas S."/>
            <person name="Lapidus A."/>
            <person name="Barry K."/>
            <person name="Detter J.C."/>
            <person name="Glavina del Rio T."/>
            <person name="Hammon N."/>
            <person name="Israni S."/>
            <person name="Pitluck S."/>
            <person name="Brettin T."/>
            <person name="Bruce D."/>
            <person name="Han C."/>
            <person name="Tapia R."/>
            <person name="Gilna P."/>
            <person name="Chertkov O."/>
            <person name="Saunders E."/>
            <person name="Schmutz J."/>
            <person name="Larimer F."/>
            <person name="Land M."/>
            <person name="Kyrpides N."/>
            <person name="Lykidis A."/>
            <person name="Moran M.A."/>
            <person name="Belas R."/>
            <person name="Ye W."/>
            <person name="Buchan A."/>
            <person name="Gonzalez J.M."/>
            <person name="Schell M.A."/>
            <person name="Richardson P."/>
        </authorList>
    </citation>
    <scope>NUCLEOTIDE SEQUENCE [LARGE SCALE GENOMIC DNA]</scope>
    <source>
        <strain>CCS1</strain>
    </source>
</reference>
<keyword id="KW-0012">Acyltransferase</keyword>
<keyword id="KW-0963">Cytoplasm</keyword>
<keyword id="KW-0408">Iron</keyword>
<keyword id="KW-0479">Metal-binding</keyword>
<keyword id="KW-1185">Reference proteome</keyword>
<keyword id="KW-0808">Transferase</keyword>
<keyword id="KW-0819">tRNA processing</keyword>
<name>TSAD_JANSC</name>
<feature type="chain" id="PRO_0000303388" description="tRNA N6-adenosine threonylcarbamoyltransferase">
    <location>
        <begin position="1"/>
        <end position="359"/>
    </location>
</feature>
<feature type="binding site" evidence="1">
    <location>
        <position position="121"/>
    </location>
    <ligand>
        <name>Fe cation</name>
        <dbReference type="ChEBI" id="CHEBI:24875"/>
    </ligand>
</feature>
<feature type="binding site" evidence="1">
    <location>
        <position position="125"/>
    </location>
    <ligand>
        <name>Fe cation</name>
        <dbReference type="ChEBI" id="CHEBI:24875"/>
    </ligand>
</feature>
<feature type="binding site" evidence="1">
    <location>
        <begin position="143"/>
        <end position="147"/>
    </location>
    <ligand>
        <name>substrate</name>
    </ligand>
</feature>
<feature type="binding site" evidence="1">
    <location>
        <position position="176"/>
    </location>
    <ligand>
        <name>substrate</name>
    </ligand>
</feature>
<feature type="binding site" evidence="1">
    <location>
        <position position="189"/>
    </location>
    <ligand>
        <name>substrate</name>
    </ligand>
</feature>
<feature type="binding site" evidence="1">
    <location>
        <position position="286"/>
    </location>
    <ligand>
        <name>substrate</name>
    </ligand>
</feature>
<feature type="binding site" evidence="1">
    <location>
        <position position="311"/>
    </location>
    <ligand>
        <name>Fe cation</name>
        <dbReference type="ChEBI" id="CHEBI:24875"/>
    </ligand>
</feature>
<accession>Q28JW5</accession>
<organism>
    <name type="scientific">Jannaschia sp. (strain CCS1)</name>
    <dbReference type="NCBI Taxonomy" id="290400"/>
    <lineage>
        <taxon>Bacteria</taxon>
        <taxon>Pseudomonadati</taxon>
        <taxon>Pseudomonadota</taxon>
        <taxon>Alphaproteobacteria</taxon>
        <taxon>Rhodobacterales</taxon>
        <taxon>Roseobacteraceae</taxon>
        <taxon>Jannaschia</taxon>
    </lineage>
</organism>
<proteinExistence type="inferred from homology"/>
<dbReference type="EC" id="2.3.1.234" evidence="1"/>
<dbReference type="EMBL" id="CP000264">
    <property type="protein sequence ID" value="ABD56997.1"/>
    <property type="molecule type" value="Genomic_DNA"/>
</dbReference>
<dbReference type="SMR" id="Q28JW5"/>
<dbReference type="STRING" id="290400.Jann_4080"/>
<dbReference type="KEGG" id="jan:Jann_4080"/>
<dbReference type="eggNOG" id="COG0533">
    <property type="taxonomic scope" value="Bacteria"/>
</dbReference>
<dbReference type="HOGENOM" id="CLU_023208_0_2_5"/>
<dbReference type="OrthoDB" id="9806197at2"/>
<dbReference type="Proteomes" id="UP000008326">
    <property type="component" value="Chromosome"/>
</dbReference>
<dbReference type="GO" id="GO:0005737">
    <property type="term" value="C:cytoplasm"/>
    <property type="evidence" value="ECO:0007669"/>
    <property type="project" value="UniProtKB-SubCell"/>
</dbReference>
<dbReference type="GO" id="GO:0005506">
    <property type="term" value="F:iron ion binding"/>
    <property type="evidence" value="ECO:0007669"/>
    <property type="project" value="UniProtKB-UniRule"/>
</dbReference>
<dbReference type="GO" id="GO:0061711">
    <property type="term" value="F:N(6)-L-threonylcarbamoyladenine synthase activity"/>
    <property type="evidence" value="ECO:0007669"/>
    <property type="project" value="UniProtKB-EC"/>
</dbReference>
<dbReference type="GO" id="GO:0002949">
    <property type="term" value="P:tRNA threonylcarbamoyladenosine modification"/>
    <property type="evidence" value="ECO:0007669"/>
    <property type="project" value="UniProtKB-UniRule"/>
</dbReference>
<dbReference type="CDD" id="cd24133">
    <property type="entry name" value="ASKHA_NBD_TsaD_bac"/>
    <property type="match status" value="1"/>
</dbReference>
<dbReference type="FunFam" id="3.30.420.40:FF:000012">
    <property type="entry name" value="tRNA N6-adenosine threonylcarbamoyltransferase"/>
    <property type="match status" value="1"/>
</dbReference>
<dbReference type="Gene3D" id="3.30.420.40">
    <property type="match status" value="2"/>
</dbReference>
<dbReference type="HAMAP" id="MF_01445">
    <property type="entry name" value="TsaD"/>
    <property type="match status" value="1"/>
</dbReference>
<dbReference type="InterPro" id="IPR043129">
    <property type="entry name" value="ATPase_NBD"/>
</dbReference>
<dbReference type="InterPro" id="IPR000905">
    <property type="entry name" value="Gcp-like_dom"/>
</dbReference>
<dbReference type="InterPro" id="IPR017861">
    <property type="entry name" value="KAE1/TsaD"/>
</dbReference>
<dbReference type="InterPro" id="IPR017860">
    <property type="entry name" value="Peptidase_M22_CS"/>
</dbReference>
<dbReference type="InterPro" id="IPR022450">
    <property type="entry name" value="TsaD"/>
</dbReference>
<dbReference type="NCBIfam" id="TIGR00329">
    <property type="entry name" value="gcp_kae1"/>
    <property type="match status" value="1"/>
</dbReference>
<dbReference type="NCBIfam" id="TIGR03723">
    <property type="entry name" value="T6A_TsaD_YgjD"/>
    <property type="match status" value="1"/>
</dbReference>
<dbReference type="PANTHER" id="PTHR11735">
    <property type="entry name" value="TRNA N6-ADENOSINE THREONYLCARBAMOYLTRANSFERASE"/>
    <property type="match status" value="1"/>
</dbReference>
<dbReference type="PANTHER" id="PTHR11735:SF6">
    <property type="entry name" value="TRNA N6-ADENOSINE THREONYLCARBAMOYLTRANSFERASE, MITOCHONDRIAL"/>
    <property type="match status" value="1"/>
</dbReference>
<dbReference type="Pfam" id="PF00814">
    <property type="entry name" value="TsaD"/>
    <property type="match status" value="1"/>
</dbReference>
<dbReference type="PRINTS" id="PR00789">
    <property type="entry name" value="OSIALOPTASE"/>
</dbReference>
<dbReference type="SUPFAM" id="SSF53067">
    <property type="entry name" value="Actin-like ATPase domain"/>
    <property type="match status" value="2"/>
</dbReference>
<dbReference type="PROSITE" id="PS01016">
    <property type="entry name" value="GLYCOPROTEASE"/>
    <property type="match status" value="1"/>
</dbReference>
<gene>
    <name evidence="1" type="primary">tsaD</name>
    <name type="synonym">gcp</name>
    <name type="ordered locus">Jann_4080</name>
</gene>